<keyword id="KW-0456">Lyase</keyword>
<keyword id="KW-0501">Molybdenum cofactor biosynthesis</keyword>
<feature type="chain" id="PRO_1000139309" description="Cyclic pyranopterin monophosphate synthase">
    <location>
        <begin position="1"/>
        <end position="159"/>
    </location>
</feature>
<feature type="active site" evidence="1">
    <location>
        <position position="128"/>
    </location>
</feature>
<feature type="binding site" evidence="1">
    <location>
        <begin position="75"/>
        <end position="77"/>
    </location>
    <ligand>
        <name>substrate</name>
    </ligand>
</feature>
<feature type="binding site" evidence="1">
    <location>
        <begin position="113"/>
        <end position="114"/>
    </location>
    <ligand>
        <name>substrate</name>
    </ligand>
</feature>
<name>MOAC_YERPB</name>
<organism>
    <name type="scientific">Yersinia pseudotuberculosis serotype IB (strain PB1/+)</name>
    <dbReference type="NCBI Taxonomy" id="502801"/>
    <lineage>
        <taxon>Bacteria</taxon>
        <taxon>Pseudomonadati</taxon>
        <taxon>Pseudomonadota</taxon>
        <taxon>Gammaproteobacteria</taxon>
        <taxon>Enterobacterales</taxon>
        <taxon>Yersiniaceae</taxon>
        <taxon>Yersinia</taxon>
    </lineage>
</organism>
<reference key="1">
    <citation type="submission" date="2008-04" db="EMBL/GenBank/DDBJ databases">
        <title>Complete sequence of Yersinia pseudotuberculosis PB1/+.</title>
        <authorList>
            <person name="Copeland A."/>
            <person name="Lucas S."/>
            <person name="Lapidus A."/>
            <person name="Glavina del Rio T."/>
            <person name="Dalin E."/>
            <person name="Tice H."/>
            <person name="Bruce D."/>
            <person name="Goodwin L."/>
            <person name="Pitluck S."/>
            <person name="Munk A.C."/>
            <person name="Brettin T."/>
            <person name="Detter J.C."/>
            <person name="Han C."/>
            <person name="Tapia R."/>
            <person name="Schmutz J."/>
            <person name="Larimer F."/>
            <person name="Land M."/>
            <person name="Hauser L."/>
            <person name="Challacombe J.F."/>
            <person name="Green L."/>
            <person name="Lindler L.E."/>
            <person name="Nikolich M.P."/>
            <person name="Richardson P."/>
        </authorList>
    </citation>
    <scope>NUCLEOTIDE SEQUENCE [LARGE SCALE GENOMIC DNA]</scope>
    <source>
        <strain>PB1/+</strain>
    </source>
</reference>
<evidence type="ECO:0000255" key="1">
    <source>
        <dbReference type="HAMAP-Rule" id="MF_01224"/>
    </source>
</evidence>
<protein>
    <recommendedName>
        <fullName evidence="1">Cyclic pyranopterin monophosphate synthase</fullName>
        <ecNumber evidence="1">4.6.1.17</ecNumber>
    </recommendedName>
    <alternativeName>
        <fullName evidence="1">Molybdenum cofactor biosynthesis protein C</fullName>
    </alternativeName>
</protein>
<accession>B2K8U0</accession>
<sequence length="159" mass="17211">MTQLTHINTAGEAHMVDVSAKNETVREARAEAFVDMQAATLAMIIDGSHHKGDVFATARIAGIQAAKKTWELIPLCHPLLLTKVEVKLEAQPEHNRVRIETCCRLTGKTGVEMEALTAASVAALTIYDMCKAVQKDMVIGPVRLLTKSGGKSGDFKVDI</sequence>
<comment type="function">
    <text evidence="1">Catalyzes the conversion of (8S)-3',8-cyclo-7,8-dihydroguanosine 5'-triphosphate to cyclic pyranopterin monophosphate (cPMP).</text>
</comment>
<comment type="catalytic activity">
    <reaction evidence="1">
        <text>(8S)-3',8-cyclo-7,8-dihydroguanosine 5'-triphosphate = cyclic pyranopterin phosphate + diphosphate</text>
        <dbReference type="Rhea" id="RHEA:49580"/>
        <dbReference type="ChEBI" id="CHEBI:33019"/>
        <dbReference type="ChEBI" id="CHEBI:59648"/>
        <dbReference type="ChEBI" id="CHEBI:131766"/>
        <dbReference type="EC" id="4.6.1.17"/>
    </reaction>
</comment>
<comment type="pathway">
    <text evidence="1">Cofactor biosynthesis; molybdopterin biosynthesis.</text>
</comment>
<comment type="subunit">
    <text evidence="1">Homohexamer; trimer of dimers.</text>
</comment>
<comment type="similarity">
    <text evidence="1">Belongs to the MoaC family.</text>
</comment>
<proteinExistence type="inferred from homology"/>
<dbReference type="EC" id="4.6.1.17" evidence="1"/>
<dbReference type="EMBL" id="CP001048">
    <property type="protein sequence ID" value="ACC88246.1"/>
    <property type="molecule type" value="Genomic_DNA"/>
</dbReference>
<dbReference type="RefSeq" id="WP_011191960.1">
    <property type="nucleotide sequence ID" value="NZ_CP009780.1"/>
</dbReference>
<dbReference type="SMR" id="B2K8U0"/>
<dbReference type="GeneID" id="49786736"/>
<dbReference type="KEGG" id="ypb:YPTS_1271"/>
<dbReference type="PATRIC" id="fig|502801.10.peg.620"/>
<dbReference type="UniPathway" id="UPA00344"/>
<dbReference type="GO" id="GO:0061799">
    <property type="term" value="F:cyclic pyranopterin monophosphate synthase activity"/>
    <property type="evidence" value="ECO:0007669"/>
    <property type="project" value="UniProtKB-UniRule"/>
</dbReference>
<dbReference type="GO" id="GO:0006777">
    <property type="term" value="P:Mo-molybdopterin cofactor biosynthetic process"/>
    <property type="evidence" value="ECO:0007669"/>
    <property type="project" value="UniProtKB-UniRule"/>
</dbReference>
<dbReference type="CDD" id="cd01420">
    <property type="entry name" value="MoaC_PE"/>
    <property type="match status" value="1"/>
</dbReference>
<dbReference type="FunFam" id="3.30.70.640:FF:000001">
    <property type="entry name" value="Cyclic pyranopterin monophosphate synthase"/>
    <property type="match status" value="1"/>
</dbReference>
<dbReference type="Gene3D" id="3.30.70.640">
    <property type="entry name" value="Molybdopterin cofactor biosynthesis C (MoaC) domain"/>
    <property type="match status" value="1"/>
</dbReference>
<dbReference type="HAMAP" id="MF_01224_B">
    <property type="entry name" value="MoaC_B"/>
    <property type="match status" value="1"/>
</dbReference>
<dbReference type="InterPro" id="IPR023045">
    <property type="entry name" value="MoaC"/>
</dbReference>
<dbReference type="InterPro" id="IPR047594">
    <property type="entry name" value="MoaC_bact/euk"/>
</dbReference>
<dbReference type="InterPro" id="IPR036522">
    <property type="entry name" value="MoaC_sf"/>
</dbReference>
<dbReference type="InterPro" id="IPR050105">
    <property type="entry name" value="MoCo_biosynth_MoaA/MoaC"/>
</dbReference>
<dbReference type="InterPro" id="IPR002820">
    <property type="entry name" value="Mopterin_CF_biosynth-C_dom"/>
</dbReference>
<dbReference type="NCBIfam" id="TIGR00581">
    <property type="entry name" value="moaC"/>
    <property type="match status" value="1"/>
</dbReference>
<dbReference type="NCBIfam" id="NF006870">
    <property type="entry name" value="PRK09364.1"/>
    <property type="match status" value="1"/>
</dbReference>
<dbReference type="PANTHER" id="PTHR22960">
    <property type="entry name" value="MOLYBDOPTERIN COFACTOR SYNTHESIS PROTEIN A"/>
    <property type="match status" value="1"/>
</dbReference>
<dbReference type="Pfam" id="PF01967">
    <property type="entry name" value="MoaC"/>
    <property type="match status" value="1"/>
</dbReference>
<dbReference type="SUPFAM" id="SSF55040">
    <property type="entry name" value="Molybdenum cofactor biosynthesis protein C, MoaC"/>
    <property type="match status" value="1"/>
</dbReference>
<gene>
    <name evidence="1" type="primary">moaC</name>
    <name type="ordered locus">YPTS_1271</name>
</gene>